<sequence>MLVAVVKELKQGEGRVACTPENVRKLTDAGHKVIVEKNAGIGSGFSNDMYEKEGAKIVTHEQAWEADLVIKVKEPHESEYQYFKKNQIIWGFLHLASSKEIVEKMQEVGVTAISGETIIKNGKAELLAPMSAIAGQRSAIMGAYYSEAQHGGQGTLVTGVHENVDIPGSTYVIFGGGVAATNAANVALGLNAKVIIIELNDDRIKYLEDMYAEKDVTVVKSTPENLAEQIKKADVFISTILIPGAKPPKLVTREMVKSMKKGSVLIDIAIDQGGTIETIRPTTISDPVYEEEGVIHYGVPNQPGAVPRTSTMALAQGNIDYILEICDKGLEQAIKDNEALSTGVNIYQGQVTNQGLASSHDLDYKEILNVIE</sequence>
<gene>
    <name type="primary">ald1</name>
    <name type="ordered locus">SAV1439</name>
</gene>
<evidence type="ECO:0000250" key="1"/>
<evidence type="ECO:0000255" key="2"/>
<evidence type="ECO:0000305" key="3"/>
<name>DHA1_STAAM</name>
<dbReference type="EC" id="1.4.1.1"/>
<dbReference type="EMBL" id="BA000017">
    <property type="protein sequence ID" value="BAB57601.1"/>
    <property type="molecule type" value="Genomic_DNA"/>
</dbReference>
<dbReference type="SMR" id="P63478"/>
<dbReference type="KEGG" id="sav:SAV1439"/>
<dbReference type="HOGENOM" id="CLU_003376_3_0_9"/>
<dbReference type="PhylomeDB" id="P63478"/>
<dbReference type="UniPathway" id="UPA00527">
    <property type="reaction ID" value="UER00585"/>
</dbReference>
<dbReference type="Proteomes" id="UP000002481">
    <property type="component" value="Chromosome"/>
</dbReference>
<dbReference type="GO" id="GO:0005886">
    <property type="term" value="C:plasma membrane"/>
    <property type="evidence" value="ECO:0007669"/>
    <property type="project" value="TreeGrafter"/>
</dbReference>
<dbReference type="GO" id="GO:0000286">
    <property type="term" value="F:alanine dehydrogenase activity"/>
    <property type="evidence" value="ECO:0007669"/>
    <property type="project" value="UniProtKB-EC"/>
</dbReference>
<dbReference type="GO" id="GO:0042853">
    <property type="term" value="P:L-alanine catabolic process"/>
    <property type="evidence" value="ECO:0007669"/>
    <property type="project" value="UniProtKB-UniPathway"/>
</dbReference>
<dbReference type="CDD" id="cd05305">
    <property type="entry name" value="L-AlaDH"/>
    <property type="match status" value="1"/>
</dbReference>
<dbReference type="FunFam" id="3.40.50.720:FF:000433">
    <property type="entry name" value="Alanine dehydrogenase 1"/>
    <property type="match status" value="1"/>
</dbReference>
<dbReference type="Gene3D" id="3.40.50.720">
    <property type="entry name" value="NAD(P)-binding Rossmann-like Domain"/>
    <property type="match status" value="2"/>
</dbReference>
<dbReference type="InterPro" id="IPR008141">
    <property type="entry name" value="Ala_DH"/>
</dbReference>
<dbReference type="InterPro" id="IPR008143">
    <property type="entry name" value="Ala_DH/PNT_CS2"/>
</dbReference>
<dbReference type="InterPro" id="IPR008142">
    <property type="entry name" value="AlaDH/PNT_CS1"/>
</dbReference>
<dbReference type="InterPro" id="IPR007886">
    <property type="entry name" value="AlaDH/PNT_N"/>
</dbReference>
<dbReference type="InterPro" id="IPR007698">
    <property type="entry name" value="AlaDH/PNT_NAD(H)-bd"/>
</dbReference>
<dbReference type="InterPro" id="IPR036291">
    <property type="entry name" value="NAD(P)-bd_dom_sf"/>
</dbReference>
<dbReference type="NCBIfam" id="TIGR00518">
    <property type="entry name" value="alaDH"/>
    <property type="match status" value="1"/>
</dbReference>
<dbReference type="PANTHER" id="PTHR42795">
    <property type="entry name" value="ALANINE DEHYDROGENASE"/>
    <property type="match status" value="1"/>
</dbReference>
<dbReference type="PANTHER" id="PTHR42795:SF1">
    <property type="entry name" value="ALANINE DEHYDROGENASE"/>
    <property type="match status" value="1"/>
</dbReference>
<dbReference type="Pfam" id="PF01262">
    <property type="entry name" value="AlaDh_PNT_C"/>
    <property type="match status" value="1"/>
</dbReference>
<dbReference type="Pfam" id="PF05222">
    <property type="entry name" value="AlaDh_PNT_N"/>
    <property type="match status" value="1"/>
</dbReference>
<dbReference type="PIRSF" id="PIRSF000183">
    <property type="entry name" value="Alanine_dh"/>
    <property type="match status" value="1"/>
</dbReference>
<dbReference type="SMART" id="SM01002">
    <property type="entry name" value="AlaDh_PNT_C"/>
    <property type="match status" value="1"/>
</dbReference>
<dbReference type="SMART" id="SM01003">
    <property type="entry name" value="AlaDh_PNT_N"/>
    <property type="match status" value="1"/>
</dbReference>
<dbReference type="SUPFAM" id="SSF52283">
    <property type="entry name" value="Formate/glycerate dehydrogenase catalytic domain-like"/>
    <property type="match status" value="1"/>
</dbReference>
<dbReference type="SUPFAM" id="SSF51735">
    <property type="entry name" value="NAD(P)-binding Rossmann-fold domains"/>
    <property type="match status" value="1"/>
</dbReference>
<dbReference type="PROSITE" id="PS00836">
    <property type="entry name" value="ALADH_PNT_1"/>
    <property type="match status" value="1"/>
</dbReference>
<dbReference type="PROSITE" id="PS00837">
    <property type="entry name" value="ALADH_PNT_2"/>
    <property type="match status" value="1"/>
</dbReference>
<reference key="1">
    <citation type="journal article" date="2001" name="Lancet">
        <title>Whole genome sequencing of meticillin-resistant Staphylococcus aureus.</title>
        <authorList>
            <person name="Kuroda M."/>
            <person name="Ohta T."/>
            <person name="Uchiyama I."/>
            <person name="Baba T."/>
            <person name="Yuzawa H."/>
            <person name="Kobayashi I."/>
            <person name="Cui L."/>
            <person name="Oguchi A."/>
            <person name="Aoki K."/>
            <person name="Nagai Y."/>
            <person name="Lian J.-Q."/>
            <person name="Ito T."/>
            <person name="Kanamori M."/>
            <person name="Matsumaru H."/>
            <person name="Maruyama A."/>
            <person name="Murakami H."/>
            <person name="Hosoyama A."/>
            <person name="Mizutani-Ui Y."/>
            <person name="Takahashi N.K."/>
            <person name="Sawano T."/>
            <person name="Inoue R."/>
            <person name="Kaito C."/>
            <person name="Sekimizu K."/>
            <person name="Hirakawa H."/>
            <person name="Kuhara S."/>
            <person name="Goto S."/>
            <person name="Yabuzaki J."/>
            <person name="Kanehisa M."/>
            <person name="Yamashita A."/>
            <person name="Oshima K."/>
            <person name="Furuya K."/>
            <person name="Yoshino C."/>
            <person name="Shiba T."/>
            <person name="Hattori M."/>
            <person name="Ogasawara N."/>
            <person name="Hayashi H."/>
            <person name="Hiramatsu K."/>
        </authorList>
    </citation>
    <scope>NUCLEOTIDE SEQUENCE [LARGE SCALE GENOMIC DNA]</scope>
    <source>
        <strain>Mu50 / ATCC 700699</strain>
    </source>
</reference>
<organism>
    <name type="scientific">Staphylococcus aureus (strain Mu50 / ATCC 700699)</name>
    <dbReference type="NCBI Taxonomy" id="158878"/>
    <lineage>
        <taxon>Bacteria</taxon>
        <taxon>Bacillati</taxon>
        <taxon>Bacillota</taxon>
        <taxon>Bacilli</taxon>
        <taxon>Bacillales</taxon>
        <taxon>Staphylococcaceae</taxon>
        <taxon>Staphylococcus</taxon>
    </lineage>
</organism>
<keyword id="KW-0520">NAD</keyword>
<keyword id="KW-0560">Oxidoreductase</keyword>
<feature type="chain" id="PRO_0000198996" description="Alanine dehydrogenase 1">
    <location>
        <begin position="1"/>
        <end position="372"/>
    </location>
</feature>
<feature type="active site" evidence="2">
    <location>
        <position position="94"/>
    </location>
</feature>
<feature type="binding site" evidence="1">
    <location>
        <begin position="170"/>
        <end position="200"/>
    </location>
    <ligand>
        <name>NAD(+)</name>
        <dbReference type="ChEBI" id="CHEBI:57540"/>
    </ligand>
</feature>
<comment type="function">
    <text evidence="1">May play a role in cell wall synthesis as L-alanine is an important constituent of the peptidoglycan layer.</text>
</comment>
<comment type="catalytic activity">
    <reaction>
        <text>L-alanine + NAD(+) + H2O = pyruvate + NH4(+) + NADH + H(+)</text>
        <dbReference type="Rhea" id="RHEA:18405"/>
        <dbReference type="ChEBI" id="CHEBI:15361"/>
        <dbReference type="ChEBI" id="CHEBI:15377"/>
        <dbReference type="ChEBI" id="CHEBI:15378"/>
        <dbReference type="ChEBI" id="CHEBI:28938"/>
        <dbReference type="ChEBI" id="CHEBI:57540"/>
        <dbReference type="ChEBI" id="CHEBI:57945"/>
        <dbReference type="ChEBI" id="CHEBI:57972"/>
        <dbReference type="EC" id="1.4.1.1"/>
    </reaction>
</comment>
<comment type="pathway">
    <text>Amino-acid degradation; L-alanine degradation via dehydrogenase pathway; NH(3) and pyruvate from L-alanine: step 1/1.</text>
</comment>
<comment type="similarity">
    <text evidence="3">Belongs to the AlaDH/PNT family.</text>
</comment>
<protein>
    <recommendedName>
        <fullName>Alanine dehydrogenase 1</fullName>
        <ecNumber>1.4.1.1</ecNumber>
    </recommendedName>
</protein>
<accession>P63478</accession>
<accession>Q99U49</accession>
<proteinExistence type="inferred from homology"/>